<proteinExistence type="inferred from homology"/>
<reference key="1">
    <citation type="journal article" date="2005" name="Proc. Natl. Acad. Sci. U.S.A.">
        <title>Whole genome sequence of Staphylococcus saprophyticus reveals the pathogenesis of uncomplicated urinary tract infection.</title>
        <authorList>
            <person name="Kuroda M."/>
            <person name="Yamashita A."/>
            <person name="Hirakawa H."/>
            <person name="Kumano M."/>
            <person name="Morikawa K."/>
            <person name="Higashide M."/>
            <person name="Maruyama A."/>
            <person name="Inose Y."/>
            <person name="Matoba K."/>
            <person name="Toh H."/>
            <person name="Kuhara S."/>
            <person name="Hattori M."/>
            <person name="Ohta T."/>
        </authorList>
    </citation>
    <scope>NUCLEOTIDE SEQUENCE [LARGE SCALE GENOMIC DNA]</scope>
    <source>
        <strain>ATCC 15305 / DSM 20229 / NCIMB 8711 / NCTC 7292 / S-41</strain>
    </source>
</reference>
<feature type="chain" id="PRO_1000034302" description="Transcription elongation factor GreA">
    <location>
        <begin position="1"/>
        <end position="158"/>
    </location>
</feature>
<feature type="coiled-coil region" evidence="1">
    <location>
        <begin position="4"/>
        <end position="75"/>
    </location>
</feature>
<accession>Q49Y48</accession>
<comment type="function">
    <text evidence="1">Necessary for efficient RNA polymerase transcription elongation past template-encoded arresting sites. The arresting sites in DNA have the property of trapping a certain fraction of elongating RNA polymerases that pass through, resulting in locked ternary complexes. Cleavage of the nascent transcript by cleavage factors such as GreA or GreB allows the resumption of elongation from the new 3'terminus. GreA releases sequences of 2 to 3 nucleotides.</text>
</comment>
<comment type="similarity">
    <text evidence="1">Belongs to the GreA/GreB family.</text>
</comment>
<organism>
    <name type="scientific">Staphylococcus saprophyticus subsp. saprophyticus (strain ATCC 15305 / DSM 20229 / NCIMB 8711 / NCTC 7292 / S-41)</name>
    <dbReference type="NCBI Taxonomy" id="342451"/>
    <lineage>
        <taxon>Bacteria</taxon>
        <taxon>Bacillati</taxon>
        <taxon>Bacillota</taxon>
        <taxon>Bacilli</taxon>
        <taxon>Bacillales</taxon>
        <taxon>Staphylococcaceae</taxon>
        <taxon>Staphylococcus</taxon>
    </lineage>
</organism>
<protein>
    <recommendedName>
        <fullName evidence="1">Transcription elongation factor GreA</fullName>
    </recommendedName>
    <alternativeName>
        <fullName evidence="1">Transcript cleavage factor GreA</fullName>
    </alternativeName>
</protein>
<evidence type="ECO:0000255" key="1">
    <source>
        <dbReference type="HAMAP-Rule" id="MF_00105"/>
    </source>
</evidence>
<dbReference type="EMBL" id="AP008934">
    <property type="protein sequence ID" value="BAE18296.1"/>
    <property type="molecule type" value="Genomic_DNA"/>
</dbReference>
<dbReference type="RefSeq" id="WP_002483128.1">
    <property type="nucleotide sequence ID" value="NZ_MTGA01000038.1"/>
</dbReference>
<dbReference type="SMR" id="Q49Y48"/>
<dbReference type="GeneID" id="66867381"/>
<dbReference type="KEGG" id="ssp:SSP1151"/>
<dbReference type="eggNOG" id="COG0782">
    <property type="taxonomic scope" value="Bacteria"/>
</dbReference>
<dbReference type="HOGENOM" id="CLU_101379_2_1_9"/>
<dbReference type="OrthoDB" id="9808774at2"/>
<dbReference type="Proteomes" id="UP000006371">
    <property type="component" value="Chromosome"/>
</dbReference>
<dbReference type="GO" id="GO:0003677">
    <property type="term" value="F:DNA binding"/>
    <property type="evidence" value="ECO:0007669"/>
    <property type="project" value="UniProtKB-UniRule"/>
</dbReference>
<dbReference type="GO" id="GO:0070063">
    <property type="term" value="F:RNA polymerase binding"/>
    <property type="evidence" value="ECO:0007669"/>
    <property type="project" value="InterPro"/>
</dbReference>
<dbReference type="GO" id="GO:0006354">
    <property type="term" value="P:DNA-templated transcription elongation"/>
    <property type="evidence" value="ECO:0007669"/>
    <property type="project" value="TreeGrafter"/>
</dbReference>
<dbReference type="GO" id="GO:0032784">
    <property type="term" value="P:regulation of DNA-templated transcription elongation"/>
    <property type="evidence" value="ECO:0007669"/>
    <property type="project" value="UniProtKB-UniRule"/>
</dbReference>
<dbReference type="FunFam" id="1.10.287.180:FF:000001">
    <property type="entry name" value="Transcription elongation factor GreA"/>
    <property type="match status" value="1"/>
</dbReference>
<dbReference type="FunFam" id="3.10.50.30:FF:000001">
    <property type="entry name" value="Transcription elongation factor GreA"/>
    <property type="match status" value="1"/>
</dbReference>
<dbReference type="Gene3D" id="3.10.50.30">
    <property type="entry name" value="Transcription elongation factor, GreA/GreB, C-terminal domain"/>
    <property type="match status" value="1"/>
</dbReference>
<dbReference type="Gene3D" id="1.10.287.180">
    <property type="entry name" value="Transcription elongation factor, GreA/GreB, N-terminal domain"/>
    <property type="match status" value="1"/>
</dbReference>
<dbReference type="HAMAP" id="MF_00105">
    <property type="entry name" value="GreA_GreB"/>
    <property type="match status" value="1"/>
</dbReference>
<dbReference type="InterPro" id="IPR036953">
    <property type="entry name" value="GreA/GreB_C_sf"/>
</dbReference>
<dbReference type="InterPro" id="IPR018151">
    <property type="entry name" value="TF_GreA/GreB_CS"/>
</dbReference>
<dbReference type="InterPro" id="IPR006359">
    <property type="entry name" value="Tscrpt_elong_fac_GreA"/>
</dbReference>
<dbReference type="InterPro" id="IPR028624">
    <property type="entry name" value="Tscrpt_elong_fac_GreA/B"/>
</dbReference>
<dbReference type="InterPro" id="IPR001437">
    <property type="entry name" value="Tscrpt_elong_fac_GreA/B_C"/>
</dbReference>
<dbReference type="InterPro" id="IPR023459">
    <property type="entry name" value="Tscrpt_elong_fac_GreA/B_fam"/>
</dbReference>
<dbReference type="InterPro" id="IPR022691">
    <property type="entry name" value="Tscrpt_elong_fac_GreA/B_N"/>
</dbReference>
<dbReference type="InterPro" id="IPR036805">
    <property type="entry name" value="Tscrpt_elong_fac_GreA/B_N_sf"/>
</dbReference>
<dbReference type="NCBIfam" id="TIGR01462">
    <property type="entry name" value="greA"/>
    <property type="match status" value="1"/>
</dbReference>
<dbReference type="NCBIfam" id="NF001261">
    <property type="entry name" value="PRK00226.1-2"/>
    <property type="match status" value="1"/>
</dbReference>
<dbReference type="NCBIfam" id="NF001263">
    <property type="entry name" value="PRK00226.1-4"/>
    <property type="match status" value="1"/>
</dbReference>
<dbReference type="PANTHER" id="PTHR30437">
    <property type="entry name" value="TRANSCRIPTION ELONGATION FACTOR GREA"/>
    <property type="match status" value="1"/>
</dbReference>
<dbReference type="PANTHER" id="PTHR30437:SF4">
    <property type="entry name" value="TRANSCRIPTION ELONGATION FACTOR GREA"/>
    <property type="match status" value="1"/>
</dbReference>
<dbReference type="Pfam" id="PF01272">
    <property type="entry name" value="GreA_GreB"/>
    <property type="match status" value="1"/>
</dbReference>
<dbReference type="Pfam" id="PF03449">
    <property type="entry name" value="GreA_GreB_N"/>
    <property type="match status" value="1"/>
</dbReference>
<dbReference type="PIRSF" id="PIRSF006092">
    <property type="entry name" value="GreA_GreB"/>
    <property type="match status" value="1"/>
</dbReference>
<dbReference type="SUPFAM" id="SSF54534">
    <property type="entry name" value="FKBP-like"/>
    <property type="match status" value="1"/>
</dbReference>
<dbReference type="SUPFAM" id="SSF46557">
    <property type="entry name" value="GreA transcript cleavage protein, N-terminal domain"/>
    <property type="match status" value="1"/>
</dbReference>
<dbReference type="PROSITE" id="PS00829">
    <property type="entry name" value="GREAB_1"/>
    <property type="match status" value="1"/>
</dbReference>
<dbReference type="PROSITE" id="PS00830">
    <property type="entry name" value="GREAB_2"/>
    <property type="match status" value="1"/>
</dbReference>
<keyword id="KW-0175">Coiled coil</keyword>
<keyword id="KW-0238">DNA-binding</keyword>
<keyword id="KW-1185">Reference proteome</keyword>
<keyword id="KW-0804">Transcription</keyword>
<keyword id="KW-0805">Transcription regulation</keyword>
<name>GREA_STAS1</name>
<sequence length="158" mass="17835">MENQKQYPMTQEGFEKLEHELEELKTVKRPEVVEKIKIARSFGDLSENSEYDAAKDEQGFIEQDIQRVENMLRNALIIEDTGNNNEVQLGKTVTIVELPGEEEEEYQIVGSAESDAFKGKISNESPMAKSLIGKKLDDEVRVPLPNGGEINVKIVNIK</sequence>
<gene>
    <name evidence="1" type="primary">greA</name>
    <name type="ordered locus">SSP1151</name>
</gene>